<comment type="function">
    <text evidence="1 2">Transfers an acetyl group from acetyl-CoA to L-homoserine, forming acetyl-L-homoserine.</text>
</comment>
<comment type="catalytic activity">
    <reaction evidence="1 2">
        <text>L-homoserine + acetyl-CoA = O-acetyl-L-homoserine + CoA</text>
        <dbReference type="Rhea" id="RHEA:13701"/>
        <dbReference type="ChEBI" id="CHEBI:57287"/>
        <dbReference type="ChEBI" id="CHEBI:57288"/>
        <dbReference type="ChEBI" id="CHEBI:57476"/>
        <dbReference type="ChEBI" id="CHEBI:57716"/>
        <dbReference type="EC" id="2.3.1.31"/>
    </reaction>
</comment>
<comment type="pathway">
    <text evidence="1">Amino-acid biosynthesis; L-methionine biosynthesis via de novo pathway; O-acetyl-L-homoserine from L-homoserine: step 1/1.</text>
</comment>
<comment type="subunit">
    <text evidence="1">Homodimer.</text>
</comment>
<comment type="subcellular location">
    <subcellularLocation>
        <location evidence="1">Cytoplasm</location>
    </subcellularLocation>
</comment>
<comment type="similarity">
    <text evidence="1">Belongs to the AB hydrolase superfamily. MetX family.</text>
</comment>
<feature type="chain" id="PRO_0000440298" description="Homoserine O-acetyltransferase">
    <location>
        <begin position="1"/>
        <end position="352"/>
    </location>
</feature>
<feature type="domain" description="AB hydrolase-1" evidence="1">
    <location>
        <begin position="37"/>
        <end position="330"/>
    </location>
</feature>
<feature type="active site" description="Nucleophile" evidence="1">
    <location>
        <position position="133"/>
    </location>
</feature>
<feature type="active site" evidence="1">
    <location>
        <position position="296"/>
    </location>
</feature>
<feature type="active site" evidence="1">
    <location>
        <position position="325"/>
    </location>
</feature>
<feature type="binding site" evidence="1">
    <location>
        <position position="206"/>
    </location>
    <ligand>
        <name>substrate</name>
    </ligand>
</feature>
<feature type="binding site" evidence="1">
    <location>
        <position position="326"/>
    </location>
    <ligand>
        <name>substrate</name>
    </ligand>
</feature>
<proteinExistence type="evidence at protein level"/>
<reference key="1">
    <citation type="journal article" date="2005" name="Proc. Natl. Acad. Sci. U.S.A.">
        <title>The genome of Salinibacter ruber: convergence and gene exchange among hyperhalophilic bacteria and archaea.</title>
        <authorList>
            <person name="Mongodin E.F."/>
            <person name="Nelson K.E."/>
            <person name="Daugherty S."/>
            <person name="DeBoy R.T."/>
            <person name="Wister J."/>
            <person name="Khouri H."/>
            <person name="Weidman J."/>
            <person name="Walsh D.A."/>
            <person name="Papke R.T."/>
            <person name="Sanchez Perez G."/>
            <person name="Sharma A.K."/>
            <person name="Nesbo C.L."/>
            <person name="MacLeod D."/>
            <person name="Bapteste E."/>
            <person name="Doolittle W.F."/>
            <person name="Charlebois R.L."/>
            <person name="Legault B."/>
            <person name="Rodriguez-Valera F."/>
        </authorList>
    </citation>
    <scope>NUCLEOTIDE SEQUENCE [LARGE SCALE GENOMIC DNA]</scope>
    <source>
        <strain>DSM 13855 / CECT 5946 / M31</strain>
    </source>
</reference>
<reference key="2">
    <citation type="journal article" date="2017" name="Nat. Chem. Biol.">
        <title>Parallel evolution of non-homologous isofunctional enzymes in methionine biosynthesis.</title>
        <authorList>
            <person name="Bastard K."/>
            <person name="Perret A."/>
            <person name="Mariage A."/>
            <person name="Bessonnet T."/>
            <person name="Pinet-Turpault A."/>
            <person name="Petit J.L."/>
            <person name="Darii E."/>
            <person name="Bazire P."/>
            <person name="Vergne-Vaxelaire C."/>
            <person name="Brewee C."/>
            <person name="Debard A."/>
            <person name="Pellouin V."/>
            <person name="Besnard-Gonnet M."/>
            <person name="Artiguenave F."/>
            <person name="Medigue C."/>
            <person name="Vallenet D."/>
            <person name="Danchin A."/>
            <person name="Zaparucha A."/>
            <person name="Weissenbach J."/>
            <person name="Salanoubat M."/>
            <person name="de Berardinis V."/>
        </authorList>
    </citation>
    <scope>FUNCTION</scope>
    <scope>CATALYTIC ACTIVITY</scope>
</reference>
<keyword id="KW-0012">Acyltransferase</keyword>
<keyword id="KW-0028">Amino-acid biosynthesis</keyword>
<keyword id="KW-0963">Cytoplasm</keyword>
<keyword id="KW-0486">Methionine biosynthesis</keyword>
<keyword id="KW-1185">Reference proteome</keyword>
<keyword id="KW-0808">Transferase</keyword>
<organism>
    <name type="scientific">Salinibacter ruber (strain DSM 13855 / M31)</name>
    <dbReference type="NCBI Taxonomy" id="309807"/>
    <lineage>
        <taxon>Bacteria</taxon>
        <taxon>Pseudomonadati</taxon>
        <taxon>Rhodothermota</taxon>
        <taxon>Rhodothermia</taxon>
        <taxon>Rhodothermales</taxon>
        <taxon>Salinibacteraceae</taxon>
        <taxon>Salinibacter</taxon>
    </lineage>
</organism>
<name>METXA_SALRD</name>
<accession>Q2S5A6</accession>
<dbReference type="EC" id="2.3.1.31" evidence="1 2"/>
<dbReference type="EMBL" id="CP000159">
    <property type="protein sequence ID" value="ABC44293.1"/>
    <property type="molecule type" value="Genomic_DNA"/>
</dbReference>
<dbReference type="RefSeq" id="WP_011403258.1">
    <property type="nucleotide sequence ID" value="NC_007677.1"/>
</dbReference>
<dbReference type="RefSeq" id="YP_444625.1">
    <property type="nucleotide sequence ID" value="NC_007677.1"/>
</dbReference>
<dbReference type="SMR" id="Q2S5A6"/>
<dbReference type="STRING" id="309807.SRU_0480"/>
<dbReference type="ESTHER" id="salrd-q2s5a6">
    <property type="family name" value="Homoserine_transacetylase"/>
</dbReference>
<dbReference type="MEROPS" id="S33.A41"/>
<dbReference type="EnsemblBacteria" id="ABC44293">
    <property type="protein sequence ID" value="ABC44293"/>
    <property type="gene ID" value="SRU_0480"/>
</dbReference>
<dbReference type="KEGG" id="sru:SRU_0480"/>
<dbReference type="PATRIC" id="fig|309807.25.peg.501"/>
<dbReference type="eggNOG" id="COG2021">
    <property type="taxonomic scope" value="Bacteria"/>
</dbReference>
<dbReference type="HOGENOM" id="CLU_028760_1_0_10"/>
<dbReference type="OrthoDB" id="9800754at2"/>
<dbReference type="UniPathway" id="UPA00051">
    <property type="reaction ID" value="UER00074"/>
</dbReference>
<dbReference type="Proteomes" id="UP000008674">
    <property type="component" value="Chromosome"/>
</dbReference>
<dbReference type="GO" id="GO:0005737">
    <property type="term" value="C:cytoplasm"/>
    <property type="evidence" value="ECO:0007669"/>
    <property type="project" value="UniProtKB-SubCell"/>
</dbReference>
<dbReference type="GO" id="GO:0004414">
    <property type="term" value="F:homoserine O-acetyltransferase activity"/>
    <property type="evidence" value="ECO:0007669"/>
    <property type="project" value="UniProtKB-UniRule"/>
</dbReference>
<dbReference type="GO" id="GO:0009092">
    <property type="term" value="P:homoserine metabolic process"/>
    <property type="evidence" value="ECO:0007669"/>
    <property type="project" value="TreeGrafter"/>
</dbReference>
<dbReference type="GO" id="GO:0009086">
    <property type="term" value="P:methionine biosynthetic process"/>
    <property type="evidence" value="ECO:0007669"/>
    <property type="project" value="UniProtKB-UniRule"/>
</dbReference>
<dbReference type="Gene3D" id="3.40.50.1820">
    <property type="entry name" value="alpha/beta hydrolase"/>
    <property type="match status" value="1"/>
</dbReference>
<dbReference type="HAMAP" id="MF_00296">
    <property type="entry name" value="MetX_acyltransf"/>
    <property type="match status" value="1"/>
</dbReference>
<dbReference type="InterPro" id="IPR000073">
    <property type="entry name" value="AB_hydrolase_1"/>
</dbReference>
<dbReference type="InterPro" id="IPR029058">
    <property type="entry name" value="AB_hydrolase_fold"/>
</dbReference>
<dbReference type="InterPro" id="IPR008220">
    <property type="entry name" value="HAT_MetX-like"/>
</dbReference>
<dbReference type="NCBIfam" id="TIGR01392">
    <property type="entry name" value="homoserO_Ac_trn"/>
    <property type="match status" value="1"/>
</dbReference>
<dbReference type="NCBIfam" id="NF001209">
    <property type="entry name" value="PRK00175.1"/>
    <property type="match status" value="1"/>
</dbReference>
<dbReference type="PANTHER" id="PTHR32268">
    <property type="entry name" value="HOMOSERINE O-ACETYLTRANSFERASE"/>
    <property type="match status" value="1"/>
</dbReference>
<dbReference type="PANTHER" id="PTHR32268:SF11">
    <property type="entry name" value="HOMOSERINE O-ACETYLTRANSFERASE"/>
    <property type="match status" value="1"/>
</dbReference>
<dbReference type="Pfam" id="PF00561">
    <property type="entry name" value="Abhydrolase_1"/>
    <property type="match status" value="1"/>
</dbReference>
<dbReference type="PIRSF" id="PIRSF000443">
    <property type="entry name" value="Homoser_Ac_trans"/>
    <property type="match status" value="1"/>
</dbReference>
<dbReference type="SUPFAM" id="SSF53474">
    <property type="entry name" value="alpha/beta-Hydrolases"/>
    <property type="match status" value="1"/>
</dbReference>
<sequence>MSQTLTVPTLTLENGTTLRDVPVAYRTWGTLNATGTNAVLVCHALTGDTNVADWWGGLLGPGRALDPTEDFVVCLNVPGSPYGSVAPVTVNPDTGERYGAGFPPFTTRDTVRLHRRALETLGVQRVACAVGGSMGGMHVLEWAFEATDDGAPFVRSLVPIAVGGRHTAWQIGWGAAQRQAIFADPKWRDGTYPPDDPPTNGLATARMMAMVSYRSRPSLDGRFGRDAMPEQDGTPYAVESYLHHHGNKLVDRFDANCYVALTRQMDTHDVARGRGDYAKVLRAIEQPSLVVGIDSDVLYPLSEQEELAEHLPSATLEVLSAPHGHDTFLIELDALNDLVSTWRANICSSVAA</sequence>
<gene>
    <name evidence="1 3" type="primary">metXA</name>
    <name evidence="4" type="ordered locus">SRU_0480</name>
</gene>
<protein>
    <recommendedName>
        <fullName evidence="1">Homoserine O-acetyltransferase</fullName>
        <shortName evidence="1 3">HAT</shortName>
        <ecNumber evidence="1 2">2.3.1.31</ecNumber>
    </recommendedName>
    <alternativeName>
        <fullName evidence="1">Homoserine transacetylase</fullName>
        <shortName evidence="1">HTA</shortName>
    </alternativeName>
</protein>
<evidence type="ECO:0000255" key="1">
    <source>
        <dbReference type="HAMAP-Rule" id="MF_00296"/>
    </source>
</evidence>
<evidence type="ECO:0000269" key="2">
    <source>
    </source>
</evidence>
<evidence type="ECO:0000303" key="3">
    <source>
    </source>
</evidence>
<evidence type="ECO:0000312" key="4">
    <source>
        <dbReference type="EMBL" id="ABC44293.1"/>
    </source>
</evidence>